<protein>
    <recommendedName>
        <fullName evidence="1">Inner membrane assembly complex subunit 17</fullName>
    </recommendedName>
</protein>
<gene>
    <name evidence="1" type="primary">INA17</name>
    <name type="ordered locus">KLTH0E13398g</name>
</gene>
<dbReference type="EMBL" id="CU928169">
    <property type="protein sequence ID" value="CAR23623.1"/>
    <property type="molecule type" value="Genomic_DNA"/>
</dbReference>
<dbReference type="RefSeq" id="XP_002554060.1">
    <property type="nucleotide sequence ID" value="XM_002554014.1"/>
</dbReference>
<dbReference type="SMR" id="C5DIL2"/>
<dbReference type="FunCoup" id="C5DIL2">
    <property type="interactions" value="56"/>
</dbReference>
<dbReference type="GeneID" id="8292229"/>
<dbReference type="KEGG" id="lth:KLTH0E13398g"/>
<dbReference type="eggNOG" id="ENOG502S3U1">
    <property type="taxonomic scope" value="Eukaryota"/>
</dbReference>
<dbReference type="HOGENOM" id="CLU_127263_1_0_1"/>
<dbReference type="InParanoid" id="C5DIL2"/>
<dbReference type="OMA" id="HYVWWKL"/>
<dbReference type="OrthoDB" id="4082954at2759"/>
<dbReference type="Proteomes" id="UP000002036">
    <property type="component" value="Chromosome E"/>
</dbReference>
<dbReference type="GO" id="GO:0005743">
    <property type="term" value="C:mitochondrial inner membrane"/>
    <property type="evidence" value="ECO:0007669"/>
    <property type="project" value="UniProtKB-SubCell"/>
</dbReference>
<comment type="function">
    <text evidence="1">Component of the INA complex (INAC) that promotes the biogenesis of mitochondrial F(1)F(0)-ATP synthase. INAC facilitates the assembly of the peripheral stalk and promotes the assembly of the catalytic F(1)-domain with the membrane-embedded F(0)-domain.</text>
</comment>
<comment type="subunit">
    <text evidence="1">Component of the inner membrane assembly (INA) complex, composed of INA17 and INA22. Interacts with a subset of F(1)F(0)-ATP synthase subunits of the F(1)-domain and the peripheral stalk.</text>
</comment>
<comment type="subcellular location">
    <subcellularLocation>
        <location evidence="1">Mitochondrion inner membrane</location>
        <topology evidence="2">Single-pass membrane protein</topology>
    </subcellularLocation>
</comment>
<comment type="similarity">
    <text evidence="3">Belongs to the INA17 family.</text>
</comment>
<evidence type="ECO:0000250" key="1">
    <source>
        <dbReference type="UniProtKB" id="Q02888"/>
    </source>
</evidence>
<evidence type="ECO:0000255" key="2"/>
<evidence type="ECO:0000305" key="3"/>
<feature type="transit peptide" description="Mitochondrion" evidence="2">
    <location>
        <begin position="1"/>
        <end position="22"/>
    </location>
</feature>
<feature type="chain" id="PRO_0000399880" description="Inner membrane assembly complex subunit 17" evidence="2">
    <location>
        <begin position="23"/>
        <end position="161"/>
    </location>
</feature>
<feature type="topological domain" description="Mitochondrial matrix" evidence="1">
    <location>
        <begin position="23"/>
        <end position="84"/>
    </location>
</feature>
<feature type="transmembrane region" description="Helical" evidence="2">
    <location>
        <begin position="85"/>
        <end position="107"/>
    </location>
</feature>
<feature type="topological domain" description="Mitochondrial intermembrane" evidence="1">
    <location>
        <begin position="108"/>
        <end position="161"/>
    </location>
</feature>
<feature type="coiled-coil region" evidence="2">
    <location>
        <begin position="109"/>
        <end position="138"/>
    </location>
</feature>
<reference key="1">
    <citation type="journal article" date="2009" name="Genome Res.">
        <title>Comparative genomics of protoploid Saccharomycetaceae.</title>
        <authorList>
            <consortium name="The Genolevures Consortium"/>
            <person name="Souciet J.-L."/>
            <person name="Dujon B."/>
            <person name="Gaillardin C."/>
            <person name="Johnston M."/>
            <person name="Baret P.V."/>
            <person name="Cliften P."/>
            <person name="Sherman D.J."/>
            <person name="Weissenbach J."/>
            <person name="Westhof E."/>
            <person name="Wincker P."/>
            <person name="Jubin C."/>
            <person name="Poulain J."/>
            <person name="Barbe V."/>
            <person name="Segurens B."/>
            <person name="Artiguenave F."/>
            <person name="Anthouard V."/>
            <person name="Vacherie B."/>
            <person name="Val M.-E."/>
            <person name="Fulton R.S."/>
            <person name="Minx P."/>
            <person name="Wilson R."/>
            <person name="Durrens P."/>
            <person name="Jean G."/>
            <person name="Marck C."/>
            <person name="Martin T."/>
            <person name="Nikolski M."/>
            <person name="Rolland T."/>
            <person name="Seret M.-L."/>
            <person name="Casaregola S."/>
            <person name="Despons L."/>
            <person name="Fairhead C."/>
            <person name="Fischer G."/>
            <person name="Lafontaine I."/>
            <person name="Leh V."/>
            <person name="Lemaire M."/>
            <person name="de Montigny J."/>
            <person name="Neuveglise C."/>
            <person name="Thierry A."/>
            <person name="Blanc-Lenfle I."/>
            <person name="Bleykasten C."/>
            <person name="Diffels J."/>
            <person name="Fritsch E."/>
            <person name="Frangeul L."/>
            <person name="Goeffon A."/>
            <person name="Jauniaux N."/>
            <person name="Kachouri-Lafond R."/>
            <person name="Payen C."/>
            <person name="Potier S."/>
            <person name="Pribylova L."/>
            <person name="Ozanne C."/>
            <person name="Richard G.-F."/>
            <person name="Sacerdot C."/>
            <person name="Straub M.-L."/>
            <person name="Talla E."/>
        </authorList>
    </citation>
    <scope>NUCLEOTIDE SEQUENCE [LARGE SCALE GENOMIC DNA]</scope>
    <source>
        <strain>ATCC 56472 / CBS 6340 / NRRL Y-8284</strain>
    </source>
</reference>
<sequence>MLNPRPCVPRLLSAVARCHKPYSTSIKSLEDLAKLKSLDDVDPDLVRKLINERTNELNSQAELAMLKQMQSQENQQQQQALKKFVRPMWIFLLMSSFFYLTGHYIWWKLEYDEREIELHKQVQALRQELDSAIAAKHSGKEPALSGAGAKKPKRWYLAWLW</sequence>
<accession>C5DIL2</accession>
<keyword id="KW-0143">Chaperone</keyword>
<keyword id="KW-0175">Coiled coil</keyword>
<keyword id="KW-0472">Membrane</keyword>
<keyword id="KW-0496">Mitochondrion</keyword>
<keyword id="KW-0999">Mitochondrion inner membrane</keyword>
<keyword id="KW-1185">Reference proteome</keyword>
<keyword id="KW-0809">Transit peptide</keyword>
<keyword id="KW-0812">Transmembrane</keyword>
<keyword id="KW-1133">Transmembrane helix</keyword>
<organism>
    <name type="scientific">Lachancea thermotolerans (strain ATCC 56472 / CBS 6340 / NRRL Y-8284)</name>
    <name type="common">Yeast</name>
    <name type="synonym">Kluyveromyces thermotolerans</name>
    <dbReference type="NCBI Taxonomy" id="559295"/>
    <lineage>
        <taxon>Eukaryota</taxon>
        <taxon>Fungi</taxon>
        <taxon>Dikarya</taxon>
        <taxon>Ascomycota</taxon>
        <taxon>Saccharomycotina</taxon>
        <taxon>Saccharomycetes</taxon>
        <taxon>Saccharomycetales</taxon>
        <taxon>Saccharomycetaceae</taxon>
        <taxon>Lachancea</taxon>
    </lineage>
</organism>
<proteinExistence type="inferred from homology"/>
<name>INA17_LACTC</name>